<accession>Q165E3</accession>
<sequence>MNREEQRLAQQTMAFVLAGGRGSRLYELTDRRAKPAMYFGGKSRIIDFPLSNAVNSGIRRIGVATQYKAHSLIRHLQRGWSFFRAERNESLDILPASQQMNDENWYKGTADAVAQNKDIIEGYGPKYIIILAGDHIYKQDYAEMIRHHVESGADVTVGCIEVPRMEASGFGVMKVDTEDRILDFIEKPGDPPAMPGHPDQALASMGIYVFETEYLFKIMEECAAVPGYSHDFGGDIIPTIVRGGKAVAHPFSRSCVRTVNEEAPYWRDVGTVDAFWQANLDLTDFKPALDLYDTEWPIWTYSELTAPAKFIHNEEGRRGSAVSSMVSGGCIISGSSLERCLLFTGVRTHSFSQLNGVVSMPYAIINRNARLTNVVVDRGVVIPQGLVVGEDPALDAQRFRRTDSGVCLITQPMIDKLDM</sequence>
<organism>
    <name type="scientific">Roseobacter denitrificans (strain ATCC 33942 / OCh 114)</name>
    <name type="common">Erythrobacter sp. (strain OCh 114)</name>
    <name type="synonym">Roseobacter denitrificans</name>
    <dbReference type="NCBI Taxonomy" id="375451"/>
    <lineage>
        <taxon>Bacteria</taxon>
        <taxon>Pseudomonadati</taxon>
        <taxon>Pseudomonadota</taxon>
        <taxon>Alphaproteobacteria</taxon>
        <taxon>Rhodobacterales</taxon>
        <taxon>Roseobacteraceae</taxon>
        <taxon>Roseobacter</taxon>
    </lineage>
</organism>
<feature type="chain" id="PRO_0000261895" description="Glucose-1-phosphate adenylyltransferase">
    <location>
        <begin position="1"/>
        <end position="419"/>
    </location>
</feature>
<feature type="binding site" evidence="1">
    <location>
        <position position="106"/>
    </location>
    <ligand>
        <name>alpha-D-glucose 1-phosphate</name>
        <dbReference type="ChEBI" id="CHEBI:58601"/>
    </ligand>
</feature>
<feature type="binding site" evidence="1">
    <location>
        <position position="171"/>
    </location>
    <ligand>
        <name>alpha-D-glucose 1-phosphate</name>
        <dbReference type="ChEBI" id="CHEBI:58601"/>
    </ligand>
</feature>
<feature type="binding site" evidence="1">
    <location>
        <begin position="186"/>
        <end position="187"/>
    </location>
    <ligand>
        <name>alpha-D-glucose 1-phosphate</name>
        <dbReference type="ChEBI" id="CHEBI:58601"/>
    </ligand>
</feature>
<feature type="binding site" evidence="1">
    <location>
        <position position="204"/>
    </location>
    <ligand>
        <name>alpha-D-glucose 1-phosphate</name>
        <dbReference type="ChEBI" id="CHEBI:58601"/>
    </ligand>
</feature>
<proteinExistence type="inferred from homology"/>
<protein>
    <recommendedName>
        <fullName evidence="1">Glucose-1-phosphate adenylyltransferase</fullName>
        <ecNumber evidence="1">2.7.7.27</ecNumber>
    </recommendedName>
    <alternativeName>
        <fullName evidence="1">ADP-glucose pyrophosphorylase</fullName>
        <shortName evidence="1">ADPGlc PPase</shortName>
    </alternativeName>
    <alternativeName>
        <fullName evidence="1">ADP-glucose synthase</fullName>
    </alternativeName>
</protein>
<keyword id="KW-0067">ATP-binding</keyword>
<keyword id="KW-0119">Carbohydrate metabolism</keyword>
<keyword id="KW-0320">Glycogen biosynthesis</keyword>
<keyword id="KW-0321">Glycogen metabolism</keyword>
<keyword id="KW-0547">Nucleotide-binding</keyword>
<keyword id="KW-0548">Nucleotidyltransferase</keyword>
<keyword id="KW-1185">Reference proteome</keyword>
<keyword id="KW-0808">Transferase</keyword>
<dbReference type="EC" id="2.7.7.27" evidence="1"/>
<dbReference type="EMBL" id="CP000362">
    <property type="protein sequence ID" value="ABG32400.1"/>
    <property type="molecule type" value="Genomic_DNA"/>
</dbReference>
<dbReference type="RefSeq" id="WP_011569016.1">
    <property type="nucleotide sequence ID" value="NC_008209.1"/>
</dbReference>
<dbReference type="SMR" id="Q165E3"/>
<dbReference type="STRING" id="375451.RD1_2874"/>
<dbReference type="KEGG" id="rde:RD1_2874"/>
<dbReference type="eggNOG" id="COG0448">
    <property type="taxonomic scope" value="Bacteria"/>
</dbReference>
<dbReference type="HOGENOM" id="CLU_029499_14_1_5"/>
<dbReference type="OrthoDB" id="9801810at2"/>
<dbReference type="UniPathway" id="UPA00164"/>
<dbReference type="Proteomes" id="UP000007029">
    <property type="component" value="Chromosome"/>
</dbReference>
<dbReference type="GO" id="GO:0005524">
    <property type="term" value="F:ATP binding"/>
    <property type="evidence" value="ECO:0007669"/>
    <property type="project" value="UniProtKB-KW"/>
</dbReference>
<dbReference type="GO" id="GO:0008878">
    <property type="term" value="F:glucose-1-phosphate adenylyltransferase activity"/>
    <property type="evidence" value="ECO:0007669"/>
    <property type="project" value="UniProtKB-UniRule"/>
</dbReference>
<dbReference type="GO" id="GO:0005978">
    <property type="term" value="P:glycogen biosynthetic process"/>
    <property type="evidence" value="ECO:0007669"/>
    <property type="project" value="UniProtKB-UniRule"/>
</dbReference>
<dbReference type="CDD" id="cd02508">
    <property type="entry name" value="ADP_Glucose_PP"/>
    <property type="match status" value="1"/>
</dbReference>
<dbReference type="CDD" id="cd04651">
    <property type="entry name" value="LbH_G1P_AT_C"/>
    <property type="match status" value="1"/>
</dbReference>
<dbReference type="Gene3D" id="2.160.10.10">
    <property type="entry name" value="Hexapeptide repeat proteins"/>
    <property type="match status" value="1"/>
</dbReference>
<dbReference type="Gene3D" id="3.90.550.10">
    <property type="entry name" value="Spore Coat Polysaccharide Biosynthesis Protein SpsA, Chain A"/>
    <property type="match status" value="1"/>
</dbReference>
<dbReference type="HAMAP" id="MF_00624">
    <property type="entry name" value="GlgC"/>
    <property type="match status" value="1"/>
</dbReference>
<dbReference type="InterPro" id="IPR011831">
    <property type="entry name" value="ADP-Glc_PPase"/>
</dbReference>
<dbReference type="InterPro" id="IPR005836">
    <property type="entry name" value="ADP_Glu_pyroP_CS"/>
</dbReference>
<dbReference type="InterPro" id="IPR023049">
    <property type="entry name" value="GlgC_bac"/>
</dbReference>
<dbReference type="InterPro" id="IPR056818">
    <property type="entry name" value="GlmU/GlgC-like_hexapep"/>
</dbReference>
<dbReference type="InterPro" id="IPR005835">
    <property type="entry name" value="NTP_transferase_dom"/>
</dbReference>
<dbReference type="InterPro" id="IPR029044">
    <property type="entry name" value="Nucleotide-diphossugar_trans"/>
</dbReference>
<dbReference type="InterPro" id="IPR011004">
    <property type="entry name" value="Trimer_LpxA-like_sf"/>
</dbReference>
<dbReference type="NCBIfam" id="TIGR02091">
    <property type="entry name" value="glgC"/>
    <property type="match status" value="1"/>
</dbReference>
<dbReference type="NCBIfam" id="NF001947">
    <property type="entry name" value="PRK00725.1"/>
    <property type="match status" value="1"/>
</dbReference>
<dbReference type="PANTHER" id="PTHR43523:SF2">
    <property type="entry name" value="GLUCOSE-1-PHOSPHATE ADENYLYLTRANSFERASE"/>
    <property type="match status" value="1"/>
</dbReference>
<dbReference type="PANTHER" id="PTHR43523">
    <property type="entry name" value="GLUCOSE-1-PHOSPHATE ADENYLYLTRANSFERASE-RELATED"/>
    <property type="match status" value="1"/>
</dbReference>
<dbReference type="Pfam" id="PF24894">
    <property type="entry name" value="Hexapep_GlmU"/>
    <property type="match status" value="1"/>
</dbReference>
<dbReference type="Pfam" id="PF00483">
    <property type="entry name" value="NTP_transferase"/>
    <property type="match status" value="1"/>
</dbReference>
<dbReference type="SUPFAM" id="SSF53448">
    <property type="entry name" value="Nucleotide-diphospho-sugar transferases"/>
    <property type="match status" value="1"/>
</dbReference>
<dbReference type="SUPFAM" id="SSF51161">
    <property type="entry name" value="Trimeric LpxA-like enzymes"/>
    <property type="match status" value="1"/>
</dbReference>
<dbReference type="PROSITE" id="PS00809">
    <property type="entry name" value="ADP_GLC_PYROPHOSPH_2"/>
    <property type="match status" value="1"/>
</dbReference>
<dbReference type="PROSITE" id="PS00810">
    <property type="entry name" value="ADP_GLC_PYROPHOSPH_3"/>
    <property type="match status" value="1"/>
</dbReference>
<evidence type="ECO:0000255" key="1">
    <source>
        <dbReference type="HAMAP-Rule" id="MF_00624"/>
    </source>
</evidence>
<gene>
    <name evidence="1" type="primary">glgC</name>
    <name type="ordered locus">RD1_2874</name>
</gene>
<name>GLGC_ROSDO</name>
<comment type="function">
    <text evidence="1">Involved in the biosynthesis of ADP-glucose, a building block required for the elongation reactions to produce glycogen. Catalyzes the reaction between ATP and alpha-D-glucose 1-phosphate (G1P) to produce pyrophosphate and ADP-Glc.</text>
</comment>
<comment type="catalytic activity">
    <reaction evidence="1">
        <text>alpha-D-glucose 1-phosphate + ATP + H(+) = ADP-alpha-D-glucose + diphosphate</text>
        <dbReference type="Rhea" id="RHEA:12120"/>
        <dbReference type="ChEBI" id="CHEBI:15378"/>
        <dbReference type="ChEBI" id="CHEBI:30616"/>
        <dbReference type="ChEBI" id="CHEBI:33019"/>
        <dbReference type="ChEBI" id="CHEBI:57498"/>
        <dbReference type="ChEBI" id="CHEBI:58601"/>
        <dbReference type="EC" id="2.7.7.27"/>
    </reaction>
</comment>
<comment type="pathway">
    <text evidence="1">Glycan biosynthesis; glycogen biosynthesis.</text>
</comment>
<comment type="subunit">
    <text evidence="1">Homotetramer.</text>
</comment>
<comment type="similarity">
    <text evidence="1">Belongs to the bacterial/plant glucose-1-phosphate adenylyltransferase family.</text>
</comment>
<reference key="1">
    <citation type="journal article" date="2007" name="J. Bacteriol.">
        <title>The complete genome sequence of Roseobacter denitrificans reveals a mixotrophic rather than photosynthetic metabolism.</title>
        <authorList>
            <person name="Swingley W.D."/>
            <person name="Sadekar S."/>
            <person name="Mastrian S.D."/>
            <person name="Matthies H.J."/>
            <person name="Hao J."/>
            <person name="Ramos H."/>
            <person name="Acharya C.R."/>
            <person name="Conrad A.L."/>
            <person name="Taylor H.L."/>
            <person name="Dejesa L.C."/>
            <person name="Shah M.K."/>
            <person name="O'Huallachain M.E."/>
            <person name="Lince M.T."/>
            <person name="Blankenship R.E."/>
            <person name="Beatty J.T."/>
            <person name="Touchman J.W."/>
        </authorList>
    </citation>
    <scope>NUCLEOTIDE SEQUENCE [LARGE SCALE GENOMIC DNA]</scope>
    <source>
        <strain>ATCC 33942 / OCh 114</strain>
    </source>
</reference>